<sequence>MAALHTTPDSPAAQLERAEDGSECDPDQEEEEEEEEKGEEVQEVEEEEEEIVVEEEEEGVAEVVQDAQVEAVAEVEVEADVEEEDVKEVLAEEECPALGTQERLSRGGDAKSPVLQEKGLQASRAPATPRDEDLEEEEEEEEDEDEDDLLTAGCQELVTFEDVAVYFSLEEWERLEADQRGLYQEVMQENYGILVSLGYPIPKPDLIFRLEQGEEPWVPDSPRPEEGDIVTGVYTGAWFWTDDIEDHEEEDDEDFLAEVAEEENEPPGLWSAAYGVGDVPGTWGPDDSDSAQTPEGWGPDPGGLGVLADGSEAKPFLPGREPGANLLSPWAFPAAVAPPAGRPETTCDVCGKVFPHRSRLAKHQRYHAAVKPFGCEECGKGFVYRSHLAIHQRTHTGEKPFPCPDCGKRFVYKSHLVTHRRIHTGERPYRCAFCGAGFGRRSYLVTHQRTHTGERPYPCSHCGRSFSQSSALARHQAVHTADRPHCCPDCGQAFRLRADFQRHRRGGGCAEAGGDGPRREPGETAAAAGPEDTDPGPEGSEVGEADGEAEAAAEEREEAAVAAPTPSGKVDPAPERRFLELGNGLGEGEGPSSHPLGFHFPVHPKSWLHPDSFPILGLPDFRERLPVDGRPLPAPLGGPLSLVEGTGLACDPFGGGGAAGGGGGLRAFGPAIGGLLAEPAPAALAEEESPWICSDCGKTFGRRAALAKHQRYHAGERPHRCADCGKSFVYGSHLARHRRTHTGERPFPCPECGARFARGSHLAAHVRGHTGEKPFVCGVCGAGFSRRAHLTAHGRAHTGERPYACGECGRRFGQSAALTRHQWAHAEEKPHRCPDCGKGFGHSSDFKRHRRTHTGEKPFRCADCGRGFAQRSNLAKHRRGHTGERPFPCPECGKRFSQRSVLVTHQRTHTGERPYACANCGRRFSQSSHLLTHMKTHRGATAAPGSGSAPAPAPKPEAAAKGPSSAGPGERGSALLEFAGGTSFGSEHQAAFAGPSGAYREGVL</sequence>
<proteinExistence type="evidence at protein level"/>
<evidence type="ECO:0000250" key="1"/>
<evidence type="ECO:0000255" key="2">
    <source>
        <dbReference type="PROSITE-ProRule" id="PRU00042"/>
    </source>
</evidence>
<evidence type="ECO:0000255" key="3">
    <source>
        <dbReference type="PROSITE-ProRule" id="PRU00119"/>
    </source>
</evidence>
<evidence type="ECO:0000256" key="4">
    <source>
        <dbReference type="SAM" id="MobiDB-lite"/>
    </source>
</evidence>
<evidence type="ECO:0000305" key="5"/>
<evidence type="ECO:0007744" key="6">
    <source>
    </source>
</evidence>
<evidence type="ECO:0007744" key="7">
    <source>
    </source>
</evidence>
<evidence type="ECO:0007744" key="8">
    <source>
    </source>
</evidence>
<evidence type="ECO:0007744" key="9">
    <source>
    </source>
</evidence>
<evidence type="ECO:0007744" key="10">
    <source>
    </source>
</evidence>
<dbReference type="EMBL" id="AC073343">
    <property type="status" value="NOT_ANNOTATED_CDS"/>
    <property type="molecule type" value="Genomic_DNA"/>
</dbReference>
<dbReference type="CCDS" id="CCDS75563.1"/>
<dbReference type="RefSeq" id="NP_001265488.1">
    <property type="nucleotide sequence ID" value="NM_001278559.2"/>
</dbReference>
<dbReference type="RefSeq" id="XP_006715693.1">
    <property type="nucleotide sequence ID" value="XM_006715630.3"/>
</dbReference>
<dbReference type="RefSeq" id="XP_024302386.1">
    <property type="nucleotide sequence ID" value="XM_024446618.2"/>
</dbReference>
<dbReference type="RefSeq" id="XP_024302387.1">
    <property type="nucleotide sequence ID" value="XM_024446619.2"/>
</dbReference>
<dbReference type="SMR" id="A6NFI3"/>
<dbReference type="BioGRID" id="133162">
    <property type="interactions" value="51"/>
</dbReference>
<dbReference type="FunCoup" id="A6NFI3">
    <property type="interactions" value="1182"/>
</dbReference>
<dbReference type="IntAct" id="A6NFI3">
    <property type="interactions" value="37"/>
</dbReference>
<dbReference type="STRING" id="9606.ENSP00000477706"/>
<dbReference type="GlyGen" id="A6NFI3">
    <property type="glycosylation" value="2 sites, 1 O-linked glycan (1 site)"/>
</dbReference>
<dbReference type="iPTMnet" id="A6NFI3"/>
<dbReference type="PhosphoSitePlus" id="A6NFI3"/>
<dbReference type="BioMuta" id="ZNF316"/>
<dbReference type="jPOST" id="A6NFI3"/>
<dbReference type="MassIVE" id="A6NFI3"/>
<dbReference type="PaxDb" id="9606-ENSP00000477706"/>
<dbReference type="PeptideAtlas" id="A6NFI3"/>
<dbReference type="ProteomicsDB" id="1053"/>
<dbReference type="Pumba" id="A6NFI3"/>
<dbReference type="Antibodypedia" id="74806">
    <property type="antibodies" value="12 antibodies from 5 providers"/>
</dbReference>
<dbReference type="Ensembl" id="ENST00000382252.6">
    <property type="protein sequence ID" value="ENSP00000477706.1"/>
    <property type="gene ID" value="ENSG00000205903.7"/>
</dbReference>
<dbReference type="GeneID" id="100131017"/>
<dbReference type="KEGG" id="hsa:100131017"/>
<dbReference type="MANE-Select" id="ENST00000382252.6">
    <property type="protein sequence ID" value="ENSP00000477706.1"/>
    <property type="RefSeq nucleotide sequence ID" value="NM_001278559.2"/>
    <property type="RefSeq protein sequence ID" value="NP_001265488.1"/>
</dbReference>
<dbReference type="UCSC" id="uc021zzj.3">
    <property type="organism name" value="human"/>
</dbReference>
<dbReference type="AGR" id="HGNC:13843"/>
<dbReference type="CTD" id="100131017"/>
<dbReference type="DisGeNET" id="100131017"/>
<dbReference type="GeneCards" id="ZNF316"/>
<dbReference type="HGNC" id="HGNC:13843">
    <property type="gene designation" value="ZNF316"/>
</dbReference>
<dbReference type="HPA" id="ENSG00000205903">
    <property type="expression patterns" value="Low tissue specificity"/>
</dbReference>
<dbReference type="neXtProt" id="NX_A6NFI3"/>
<dbReference type="OpenTargets" id="ENSG00000205903"/>
<dbReference type="VEuPathDB" id="HostDB:ENSG00000205903"/>
<dbReference type="eggNOG" id="KOG1721">
    <property type="taxonomic scope" value="Eukaryota"/>
</dbReference>
<dbReference type="GeneTree" id="ENSGT00940000162728"/>
<dbReference type="HOGENOM" id="CLU_002678_23_2_1"/>
<dbReference type="InParanoid" id="A6NFI3"/>
<dbReference type="OMA" id="EEETPWI"/>
<dbReference type="OrthoDB" id="9445482at2759"/>
<dbReference type="PAN-GO" id="A6NFI3">
    <property type="GO annotations" value="4 GO annotations based on evolutionary models"/>
</dbReference>
<dbReference type="PhylomeDB" id="A6NFI3"/>
<dbReference type="PathwayCommons" id="A6NFI3"/>
<dbReference type="SignaLink" id="A6NFI3"/>
<dbReference type="BioGRID-ORCS" id="100131017">
    <property type="hits" value="12 hits in 159 CRISPR screens"/>
</dbReference>
<dbReference type="GenomeRNAi" id="100131017"/>
<dbReference type="Pharos" id="A6NFI3">
    <property type="development level" value="Tdark"/>
</dbReference>
<dbReference type="PRO" id="PR:A6NFI3"/>
<dbReference type="Proteomes" id="UP000005640">
    <property type="component" value="Chromosome 7"/>
</dbReference>
<dbReference type="RNAct" id="A6NFI3">
    <property type="molecule type" value="protein"/>
</dbReference>
<dbReference type="Bgee" id="ENSG00000205903">
    <property type="expression patterns" value="Expressed in kidney epithelium and 155 other cell types or tissues"/>
</dbReference>
<dbReference type="ExpressionAtlas" id="A6NFI3">
    <property type="expression patterns" value="baseline and differential"/>
</dbReference>
<dbReference type="GO" id="GO:0005634">
    <property type="term" value="C:nucleus"/>
    <property type="evidence" value="ECO:0000318"/>
    <property type="project" value="GO_Central"/>
</dbReference>
<dbReference type="GO" id="GO:0000981">
    <property type="term" value="F:DNA-binding transcription factor activity, RNA polymerase II-specific"/>
    <property type="evidence" value="ECO:0000318"/>
    <property type="project" value="GO_Central"/>
</dbReference>
<dbReference type="GO" id="GO:0043565">
    <property type="term" value="F:sequence-specific DNA binding"/>
    <property type="evidence" value="ECO:0000318"/>
    <property type="project" value="GO_Central"/>
</dbReference>
<dbReference type="GO" id="GO:0008270">
    <property type="term" value="F:zinc ion binding"/>
    <property type="evidence" value="ECO:0007669"/>
    <property type="project" value="UniProtKB-KW"/>
</dbReference>
<dbReference type="GO" id="GO:0006357">
    <property type="term" value="P:regulation of transcription by RNA polymerase II"/>
    <property type="evidence" value="ECO:0000318"/>
    <property type="project" value="GO_Central"/>
</dbReference>
<dbReference type="CDD" id="cd07765">
    <property type="entry name" value="KRAB_A-box"/>
    <property type="match status" value="1"/>
</dbReference>
<dbReference type="FunFam" id="3.30.160.60:FF:003560">
    <property type="match status" value="1"/>
</dbReference>
<dbReference type="FunFam" id="3.30.160.60:FF:003867">
    <property type="match status" value="1"/>
</dbReference>
<dbReference type="FunFam" id="3.30.160.60:FF:000322">
    <property type="entry name" value="GDNF-inducible zinc finger protein 1"/>
    <property type="match status" value="2"/>
</dbReference>
<dbReference type="FunFam" id="3.30.160.60:FF:000557">
    <property type="entry name" value="zinc finger and SCAN domain-containing protein 29"/>
    <property type="match status" value="1"/>
</dbReference>
<dbReference type="FunFam" id="3.30.160.60:FF:000478">
    <property type="entry name" value="Zinc finger protein 133"/>
    <property type="match status" value="1"/>
</dbReference>
<dbReference type="FunFam" id="3.30.160.60:FF:000006">
    <property type="entry name" value="Zinc finger protein 184 (Kruppel-like)"/>
    <property type="match status" value="1"/>
</dbReference>
<dbReference type="FunFam" id="3.30.160.60:FF:002343">
    <property type="entry name" value="Zinc finger protein 33A"/>
    <property type="match status" value="1"/>
</dbReference>
<dbReference type="FunFam" id="3.30.160.60:FF:000016">
    <property type="entry name" value="zinc finger protein 37 homolog"/>
    <property type="match status" value="1"/>
</dbReference>
<dbReference type="FunFam" id="3.30.160.60:FF:000180">
    <property type="entry name" value="Zinc finger protein 689"/>
    <property type="match status" value="1"/>
</dbReference>
<dbReference type="FunFam" id="3.30.160.60:FF:000931">
    <property type="entry name" value="zinc finger protein 697"/>
    <property type="match status" value="1"/>
</dbReference>
<dbReference type="FunFam" id="3.30.160.60:FF:002226">
    <property type="entry name" value="Zinc finger protein 764"/>
    <property type="match status" value="1"/>
</dbReference>
<dbReference type="FunFam" id="3.30.160.60:FF:000933">
    <property type="entry name" value="zinc finger protein 771"/>
    <property type="match status" value="1"/>
</dbReference>
<dbReference type="Gene3D" id="6.10.140.140">
    <property type="match status" value="1"/>
</dbReference>
<dbReference type="Gene3D" id="3.30.160.60">
    <property type="entry name" value="Classic Zinc Finger"/>
    <property type="match status" value="15"/>
</dbReference>
<dbReference type="InterPro" id="IPR001909">
    <property type="entry name" value="KRAB"/>
</dbReference>
<dbReference type="InterPro" id="IPR036051">
    <property type="entry name" value="KRAB_dom_sf"/>
</dbReference>
<dbReference type="InterPro" id="IPR036236">
    <property type="entry name" value="Znf_C2H2_sf"/>
</dbReference>
<dbReference type="InterPro" id="IPR013087">
    <property type="entry name" value="Znf_C2H2_type"/>
</dbReference>
<dbReference type="PANTHER" id="PTHR24399">
    <property type="entry name" value="ZINC FINGER AND BTB DOMAIN-CONTAINING"/>
    <property type="match status" value="1"/>
</dbReference>
<dbReference type="PANTHER" id="PTHR24399:SF68">
    <property type="entry name" value="ZINC FINGER PROTEIN 358-RELATED"/>
    <property type="match status" value="1"/>
</dbReference>
<dbReference type="Pfam" id="PF01352">
    <property type="entry name" value="KRAB"/>
    <property type="match status" value="1"/>
</dbReference>
<dbReference type="Pfam" id="PF00096">
    <property type="entry name" value="zf-C2H2"/>
    <property type="match status" value="14"/>
</dbReference>
<dbReference type="SMART" id="SM00349">
    <property type="entry name" value="KRAB"/>
    <property type="match status" value="1"/>
</dbReference>
<dbReference type="SMART" id="SM00355">
    <property type="entry name" value="ZnF_C2H2"/>
    <property type="match status" value="15"/>
</dbReference>
<dbReference type="SUPFAM" id="SSF57667">
    <property type="entry name" value="beta-beta-alpha zinc fingers"/>
    <property type="match status" value="8"/>
</dbReference>
<dbReference type="SUPFAM" id="SSF109640">
    <property type="entry name" value="KRAB domain (Kruppel-associated box)"/>
    <property type="match status" value="1"/>
</dbReference>
<dbReference type="PROSITE" id="PS50805">
    <property type="entry name" value="KRAB"/>
    <property type="match status" value="1"/>
</dbReference>
<dbReference type="PROSITE" id="PS00028">
    <property type="entry name" value="ZINC_FINGER_C2H2_1"/>
    <property type="match status" value="14"/>
</dbReference>
<dbReference type="PROSITE" id="PS50157">
    <property type="entry name" value="ZINC_FINGER_C2H2_2"/>
    <property type="match status" value="15"/>
</dbReference>
<reference key="1">
    <citation type="journal article" date="2003" name="Nature">
        <title>The DNA sequence of human chromosome 7.</title>
        <authorList>
            <person name="Hillier L.W."/>
            <person name="Fulton R.S."/>
            <person name="Fulton L.A."/>
            <person name="Graves T.A."/>
            <person name="Pepin K.H."/>
            <person name="Wagner-McPherson C."/>
            <person name="Layman D."/>
            <person name="Maas J."/>
            <person name="Jaeger S."/>
            <person name="Walker R."/>
            <person name="Wylie K."/>
            <person name="Sekhon M."/>
            <person name="Becker M.C."/>
            <person name="O'Laughlin M.D."/>
            <person name="Schaller M.E."/>
            <person name="Fewell G.A."/>
            <person name="Delehaunty K.D."/>
            <person name="Miner T.L."/>
            <person name="Nash W.E."/>
            <person name="Cordes M."/>
            <person name="Du H."/>
            <person name="Sun H."/>
            <person name="Edwards J."/>
            <person name="Bradshaw-Cordum H."/>
            <person name="Ali J."/>
            <person name="Andrews S."/>
            <person name="Isak A."/>
            <person name="Vanbrunt A."/>
            <person name="Nguyen C."/>
            <person name="Du F."/>
            <person name="Lamar B."/>
            <person name="Courtney L."/>
            <person name="Kalicki J."/>
            <person name="Ozersky P."/>
            <person name="Bielicki L."/>
            <person name="Scott K."/>
            <person name="Holmes A."/>
            <person name="Harkins R."/>
            <person name="Harris A."/>
            <person name="Strong C.M."/>
            <person name="Hou S."/>
            <person name="Tomlinson C."/>
            <person name="Dauphin-Kohlberg S."/>
            <person name="Kozlowicz-Reilly A."/>
            <person name="Leonard S."/>
            <person name="Rohlfing T."/>
            <person name="Rock S.M."/>
            <person name="Tin-Wollam A.-M."/>
            <person name="Abbott A."/>
            <person name="Minx P."/>
            <person name="Maupin R."/>
            <person name="Strowmatt C."/>
            <person name="Latreille P."/>
            <person name="Miller N."/>
            <person name="Johnson D."/>
            <person name="Murray J."/>
            <person name="Woessner J.P."/>
            <person name="Wendl M.C."/>
            <person name="Yang S.-P."/>
            <person name="Schultz B.R."/>
            <person name="Wallis J.W."/>
            <person name="Spieth J."/>
            <person name="Bieri T.A."/>
            <person name="Nelson J.O."/>
            <person name="Berkowicz N."/>
            <person name="Wohldmann P.E."/>
            <person name="Cook L.L."/>
            <person name="Hickenbotham M.T."/>
            <person name="Eldred J."/>
            <person name="Williams D."/>
            <person name="Bedell J.A."/>
            <person name="Mardis E.R."/>
            <person name="Clifton S.W."/>
            <person name="Chissoe S.L."/>
            <person name="Marra M.A."/>
            <person name="Raymond C."/>
            <person name="Haugen E."/>
            <person name="Gillett W."/>
            <person name="Zhou Y."/>
            <person name="James R."/>
            <person name="Phelps K."/>
            <person name="Iadanoto S."/>
            <person name="Bubb K."/>
            <person name="Simms E."/>
            <person name="Levy R."/>
            <person name="Clendenning J."/>
            <person name="Kaul R."/>
            <person name="Kent W.J."/>
            <person name="Furey T.S."/>
            <person name="Baertsch R.A."/>
            <person name="Brent M.R."/>
            <person name="Keibler E."/>
            <person name="Flicek P."/>
            <person name="Bork P."/>
            <person name="Suyama M."/>
            <person name="Bailey J.A."/>
            <person name="Portnoy M.E."/>
            <person name="Torrents D."/>
            <person name="Chinwalla A.T."/>
            <person name="Gish W.R."/>
            <person name="Eddy S.R."/>
            <person name="McPherson J.D."/>
            <person name="Olson M.V."/>
            <person name="Eichler E.E."/>
            <person name="Green E.D."/>
            <person name="Waterston R.H."/>
            <person name="Wilson R.K."/>
        </authorList>
    </citation>
    <scope>NUCLEOTIDE SEQUENCE [LARGE SCALE GENOMIC DNA]</scope>
</reference>
<reference key="2">
    <citation type="journal article" date="2008" name="Proc. Natl. Acad. Sci. U.S.A.">
        <title>A quantitative atlas of mitotic phosphorylation.</title>
        <authorList>
            <person name="Dephoure N."/>
            <person name="Zhou C."/>
            <person name="Villen J."/>
            <person name="Beausoleil S.A."/>
            <person name="Bakalarski C.E."/>
            <person name="Elledge S.J."/>
            <person name="Gygi S.P."/>
        </authorList>
    </citation>
    <scope>IDENTIFICATION BY MASS SPECTROMETRY [LARGE SCALE ANALYSIS]</scope>
    <source>
        <tissue>Cervix carcinoma</tissue>
    </source>
</reference>
<reference key="3">
    <citation type="journal article" date="2009" name="Mol. Cell. Proteomics">
        <title>Large-scale proteomics analysis of the human kinome.</title>
        <authorList>
            <person name="Oppermann F.S."/>
            <person name="Gnad F."/>
            <person name="Olsen J.V."/>
            <person name="Hornberger R."/>
            <person name="Greff Z."/>
            <person name="Keri G."/>
            <person name="Mann M."/>
            <person name="Daub H."/>
        </authorList>
    </citation>
    <scope>ACETYLATION [LARGE SCALE ANALYSIS] AT ALA-2</scope>
    <scope>PHOSPHORYLATION [LARGE SCALE ANALYSIS] AT SER-10</scope>
    <scope>CLEAVAGE OF INITIATOR METHIONINE [LARGE SCALE ANALYSIS]</scope>
    <scope>IDENTIFICATION BY MASS SPECTROMETRY [LARGE SCALE ANALYSIS]</scope>
</reference>
<reference key="4">
    <citation type="journal article" date="2010" name="Sci. Signal.">
        <title>Quantitative phosphoproteomics reveals widespread full phosphorylation site occupancy during mitosis.</title>
        <authorList>
            <person name="Olsen J.V."/>
            <person name="Vermeulen M."/>
            <person name="Santamaria A."/>
            <person name="Kumar C."/>
            <person name="Miller M.L."/>
            <person name="Jensen L.J."/>
            <person name="Gnad F."/>
            <person name="Cox J."/>
            <person name="Jensen T.S."/>
            <person name="Nigg E.A."/>
            <person name="Brunak S."/>
            <person name="Mann M."/>
        </authorList>
    </citation>
    <scope>ACETYLATION [LARGE SCALE ANALYSIS] AT ALA-2</scope>
    <scope>PHOSPHORYLATION [LARGE SCALE ANALYSIS] AT SER-10 AND SER-112</scope>
    <scope>CLEAVAGE OF INITIATOR METHIONINE [LARGE SCALE ANALYSIS]</scope>
    <scope>IDENTIFICATION BY MASS SPECTROMETRY [LARGE SCALE ANALYSIS]</scope>
    <source>
        <tissue>Cervix carcinoma</tissue>
    </source>
</reference>
<reference key="5">
    <citation type="journal article" date="2011" name="Sci. Signal.">
        <title>System-wide temporal characterization of the proteome and phosphoproteome of human embryonic stem cell differentiation.</title>
        <authorList>
            <person name="Rigbolt K.T."/>
            <person name="Prokhorova T.A."/>
            <person name="Akimov V."/>
            <person name="Henningsen J."/>
            <person name="Johansen P.T."/>
            <person name="Kratchmarova I."/>
            <person name="Kassem M."/>
            <person name="Mann M."/>
            <person name="Olsen J.V."/>
            <person name="Blagoev B."/>
        </authorList>
    </citation>
    <scope>ACETYLATION [LARGE SCALE ANALYSIS] AT ALA-2</scope>
    <scope>PHOSPHORYLATION [LARGE SCALE ANALYSIS] AT SER-10</scope>
    <scope>CLEAVAGE OF INITIATOR METHIONINE [LARGE SCALE ANALYSIS]</scope>
    <scope>IDENTIFICATION BY MASS SPECTROMETRY [LARGE SCALE ANALYSIS]</scope>
</reference>
<reference key="6">
    <citation type="journal article" date="2013" name="J. Proteome Res.">
        <title>Toward a comprehensive characterization of a human cancer cell phosphoproteome.</title>
        <authorList>
            <person name="Zhou H."/>
            <person name="Di Palma S."/>
            <person name="Preisinger C."/>
            <person name="Peng M."/>
            <person name="Polat A.N."/>
            <person name="Heck A.J."/>
            <person name="Mohammed S."/>
        </authorList>
    </citation>
    <scope>PHOSPHORYLATION [LARGE SCALE ANALYSIS] AT THR-7; SER-10 AND SER-112</scope>
    <scope>IDENTIFICATION BY MASS SPECTROMETRY [LARGE SCALE ANALYSIS]</scope>
    <source>
        <tissue>Cervix carcinoma</tissue>
        <tissue>Erythroleukemia</tissue>
    </source>
</reference>
<reference key="7">
    <citation type="journal article" date="2017" name="Nat. Struct. Mol. Biol.">
        <title>Site-specific mapping of the human SUMO proteome reveals co-modification with phosphorylation.</title>
        <authorList>
            <person name="Hendriks I.A."/>
            <person name="Lyon D."/>
            <person name="Young C."/>
            <person name="Jensen L.J."/>
            <person name="Vertegaal A.C."/>
            <person name="Nielsen M.L."/>
        </authorList>
    </citation>
    <scope>SUMOYLATION [LARGE SCALE ANALYSIS] AT LYS-829 AND LYS-955</scope>
    <scope>IDENTIFICATION BY MASS SPECTROMETRY [LARGE SCALE ANALYSIS]</scope>
</reference>
<name>ZN316_HUMAN</name>
<accession>A6NFI3</accession>
<feature type="initiator methionine" description="Removed" evidence="6 7 8">
    <location>
        <position position="1"/>
    </location>
</feature>
<feature type="chain" id="PRO_0000348942" description="Zinc finger protein 316">
    <location>
        <begin position="2"/>
        <end position="1004"/>
    </location>
</feature>
<feature type="domain" description="KRAB" evidence="3">
    <location>
        <begin position="158"/>
        <end position="229"/>
    </location>
</feature>
<feature type="zinc finger region" description="C2H2-type 1" evidence="2">
    <location>
        <begin position="345"/>
        <end position="367"/>
    </location>
</feature>
<feature type="zinc finger region" description="C2H2-type 2" evidence="2">
    <location>
        <begin position="373"/>
        <end position="395"/>
    </location>
</feature>
<feature type="zinc finger region" description="C2H2-type 3" evidence="2">
    <location>
        <begin position="401"/>
        <end position="423"/>
    </location>
</feature>
<feature type="zinc finger region" description="C2H2-type 4" evidence="2">
    <location>
        <begin position="429"/>
        <end position="451"/>
    </location>
</feature>
<feature type="zinc finger region" description="C2H2-type 5" evidence="2">
    <location>
        <begin position="457"/>
        <end position="479"/>
    </location>
</feature>
<feature type="zinc finger region" description="C2H2-type 6; degenerate" evidence="2">
    <location>
        <begin position="485"/>
        <end position="512"/>
    </location>
</feature>
<feature type="zinc finger region" description="C2H2-type 7" evidence="2">
    <location>
        <begin position="691"/>
        <end position="713"/>
    </location>
</feature>
<feature type="zinc finger region" description="C2H2-type 8" evidence="2">
    <location>
        <begin position="719"/>
        <end position="741"/>
    </location>
</feature>
<feature type="zinc finger region" description="C2H2-type 9" evidence="2">
    <location>
        <begin position="747"/>
        <end position="769"/>
    </location>
</feature>
<feature type="zinc finger region" description="C2H2-type 10" evidence="2">
    <location>
        <begin position="775"/>
        <end position="797"/>
    </location>
</feature>
<feature type="zinc finger region" description="C2H2-type 11" evidence="2">
    <location>
        <begin position="803"/>
        <end position="825"/>
    </location>
</feature>
<feature type="zinc finger region" description="C2H2-type 12" evidence="2">
    <location>
        <begin position="831"/>
        <end position="853"/>
    </location>
</feature>
<feature type="zinc finger region" description="C2H2-type 13" evidence="2">
    <location>
        <begin position="859"/>
        <end position="881"/>
    </location>
</feature>
<feature type="zinc finger region" description="C2H2-type 14" evidence="2">
    <location>
        <begin position="887"/>
        <end position="909"/>
    </location>
</feature>
<feature type="zinc finger region" description="C2H2-type 15" evidence="2">
    <location>
        <begin position="915"/>
        <end position="937"/>
    </location>
</feature>
<feature type="region of interest" description="Disordered" evidence="4">
    <location>
        <begin position="1"/>
        <end position="148"/>
    </location>
</feature>
<feature type="region of interest" description="Disordered" evidence="4">
    <location>
        <begin position="508"/>
        <end position="574"/>
    </location>
</feature>
<feature type="region of interest" description="Disordered" evidence="4">
    <location>
        <begin position="936"/>
        <end position="976"/>
    </location>
</feature>
<feature type="compositionally biased region" description="Acidic residues" evidence="4">
    <location>
        <begin position="21"/>
        <end position="60"/>
    </location>
</feature>
<feature type="compositionally biased region" description="Low complexity" evidence="4">
    <location>
        <begin position="61"/>
        <end position="72"/>
    </location>
</feature>
<feature type="compositionally biased region" description="Acidic residues" evidence="4">
    <location>
        <begin position="73"/>
        <end position="95"/>
    </location>
</feature>
<feature type="compositionally biased region" description="Acidic residues" evidence="4">
    <location>
        <begin position="132"/>
        <end position="148"/>
    </location>
</feature>
<feature type="compositionally biased region" description="Acidic residues" evidence="4">
    <location>
        <begin position="531"/>
        <end position="557"/>
    </location>
</feature>
<feature type="compositionally biased region" description="Low complexity" evidence="4">
    <location>
        <begin position="939"/>
        <end position="968"/>
    </location>
</feature>
<feature type="modified residue" description="N-acetylalanine" evidence="6 7 8">
    <location>
        <position position="2"/>
    </location>
</feature>
<feature type="modified residue" description="Phosphothreonine" evidence="9">
    <location>
        <position position="7"/>
    </location>
</feature>
<feature type="modified residue" description="Phosphoserine" evidence="6 7 8 9">
    <location>
        <position position="10"/>
    </location>
</feature>
<feature type="modified residue" description="Phosphoserine" evidence="7 9">
    <location>
        <position position="112"/>
    </location>
</feature>
<feature type="cross-link" description="Glycyl lysine isopeptide (Lys-Gly) (interchain with G-Cter in SUMO2)" evidence="10">
    <location>
        <position position="829"/>
    </location>
</feature>
<feature type="cross-link" description="Glycyl lysine isopeptide (Lys-Gly) (interchain with G-Cter in SUMO2)" evidence="10">
    <location>
        <position position="955"/>
    </location>
</feature>
<comment type="function">
    <text evidence="1">May be involved in transcriptional regulation.</text>
</comment>
<comment type="subcellular location">
    <subcellularLocation>
        <location evidence="1">Nucleus</location>
    </subcellularLocation>
</comment>
<comment type="similarity">
    <text evidence="5">Belongs to the krueppel C2H2-type zinc-finger protein family.</text>
</comment>
<gene>
    <name type="primary">ZNF316</name>
</gene>
<protein>
    <recommendedName>
        <fullName>Zinc finger protein 316</fullName>
    </recommendedName>
</protein>
<organism>
    <name type="scientific">Homo sapiens</name>
    <name type="common">Human</name>
    <dbReference type="NCBI Taxonomy" id="9606"/>
    <lineage>
        <taxon>Eukaryota</taxon>
        <taxon>Metazoa</taxon>
        <taxon>Chordata</taxon>
        <taxon>Craniata</taxon>
        <taxon>Vertebrata</taxon>
        <taxon>Euteleostomi</taxon>
        <taxon>Mammalia</taxon>
        <taxon>Eutheria</taxon>
        <taxon>Euarchontoglires</taxon>
        <taxon>Primates</taxon>
        <taxon>Haplorrhini</taxon>
        <taxon>Catarrhini</taxon>
        <taxon>Hominidae</taxon>
        <taxon>Homo</taxon>
    </lineage>
</organism>
<keyword id="KW-0007">Acetylation</keyword>
<keyword id="KW-0238">DNA-binding</keyword>
<keyword id="KW-1017">Isopeptide bond</keyword>
<keyword id="KW-0479">Metal-binding</keyword>
<keyword id="KW-0539">Nucleus</keyword>
<keyword id="KW-0597">Phosphoprotein</keyword>
<keyword id="KW-1267">Proteomics identification</keyword>
<keyword id="KW-1185">Reference proteome</keyword>
<keyword id="KW-0677">Repeat</keyword>
<keyword id="KW-0804">Transcription</keyword>
<keyword id="KW-0805">Transcription regulation</keyword>
<keyword id="KW-0832">Ubl conjugation</keyword>
<keyword id="KW-0862">Zinc</keyword>
<keyword id="KW-0863">Zinc-finger</keyword>